<feature type="chain" id="PRO_0000136868" description="Large ribosomal subunit protein eL24">
    <location>
        <begin position="1"/>
        <end position="157"/>
    </location>
</feature>
<feature type="region of interest" description="Disordered" evidence="3">
    <location>
        <begin position="106"/>
        <end position="157"/>
    </location>
</feature>
<feature type="compositionally biased region" description="Basic and acidic residues" evidence="3">
    <location>
        <begin position="106"/>
        <end position="117"/>
    </location>
</feature>
<feature type="compositionally biased region" description="Low complexity" evidence="3">
    <location>
        <begin position="123"/>
        <end position="140"/>
    </location>
</feature>
<feature type="modified residue" description="ADP-ribosyl glutamic acid" evidence="1">
    <location>
        <position position="4"/>
    </location>
</feature>
<feature type="modified residue" description="N6-acetyllysine; alternate" evidence="1">
    <location>
        <position position="27"/>
    </location>
</feature>
<feature type="modified residue" description="N6-acetyllysine" evidence="1">
    <location>
        <position position="77"/>
    </location>
</feature>
<feature type="modified residue" description="Phosphothreonine" evidence="1">
    <location>
        <position position="83"/>
    </location>
</feature>
<feature type="modified residue" description="Phosphoserine" evidence="1">
    <location>
        <position position="86"/>
    </location>
</feature>
<feature type="modified residue" description="N6-acetyllysine" evidence="1">
    <location>
        <position position="93"/>
    </location>
</feature>
<feature type="modified residue" description="N6-succinyllysine" evidence="2">
    <location>
        <position position="131"/>
    </location>
</feature>
<feature type="modified residue" description="Phosphoserine" evidence="1">
    <location>
        <position position="149"/>
    </location>
</feature>
<feature type="cross-link" description="Glycyl lysine isopeptide (Lys-Gly) (interchain with G-Cter in SUMO2)" evidence="1">
    <location>
        <position position="2"/>
    </location>
</feature>
<feature type="cross-link" description="Glycyl lysine isopeptide (Lys-Gly) (interchain with G-Cter in SUMO2); alternate" evidence="1">
    <location>
        <position position="27"/>
    </location>
</feature>
<feature type="cross-link" description="Glycyl lysine isopeptide (Lys-Gly) (interchain with G-Cter in SUMO2)" evidence="1">
    <location>
        <position position="35"/>
    </location>
</feature>
<feature type="cross-link" description="Glycyl lysine isopeptide (Lys-Gly) (interchain with G-Cter in SUMO2)" evidence="1">
    <location>
        <position position="147"/>
    </location>
</feature>
<protein>
    <recommendedName>
        <fullName evidence="4">Large ribosomal subunit protein eL24</fullName>
    </recommendedName>
    <alternativeName>
        <fullName>60S ribosomal protein L24</fullName>
    </alternativeName>
</protein>
<sequence length="157" mass="17779">MKVELCSFSGYKIYPGHGRRYARTDGKVFQFLNAKCESAFLSKRNPRQINWTVLYRRKHKKGQSEEIQKKRTRRAVKFQRAITGASLADIMAKRNQKPEVRKAQREQAIRAAKEAKKAKQASKKTAMAAAKAPTKAAPKQKIVKPVKVSAPRVGGKR</sequence>
<name>RL24_MACFA</name>
<organism>
    <name type="scientific">Macaca fascicularis</name>
    <name type="common">Crab-eating macaque</name>
    <name type="synonym">Cynomolgus monkey</name>
    <dbReference type="NCBI Taxonomy" id="9541"/>
    <lineage>
        <taxon>Eukaryota</taxon>
        <taxon>Metazoa</taxon>
        <taxon>Chordata</taxon>
        <taxon>Craniata</taxon>
        <taxon>Vertebrata</taxon>
        <taxon>Euteleostomi</taxon>
        <taxon>Mammalia</taxon>
        <taxon>Eutheria</taxon>
        <taxon>Euarchontoglires</taxon>
        <taxon>Primates</taxon>
        <taxon>Haplorrhini</taxon>
        <taxon>Catarrhini</taxon>
        <taxon>Cercopithecidae</taxon>
        <taxon>Cercopithecinae</taxon>
        <taxon>Macaca</taxon>
    </lineage>
</organism>
<keyword id="KW-0007">Acetylation</keyword>
<keyword id="KW-0013">ADP-ribosylation</keyword>
<keyword id="KW-0963">Cytoplasm</keyword>
<keyword id="KW-1017">Isopeptide bond</keyword>
<keyword id="KW-0597">Phosphoprotein</keyword>
<keyword id="KW-1185">Reference proteome</keyword>
<keyword id="KW-0687">Ribonucleoprotein</keyword>
<keyword id="KW-0689">Ribosomal protein</keyword>
<keyword id="KW-0832">Ubl conjugation</keyword>
<comment type="function">
    <text evidence="1">Component of the large ribosomal subunit. The ribosome is a large ribonucleoprotein complex responsible for the synthesis of proteins in the cell.</text>
</comment>
<comment type="subunit">
    <text evidence="1">Component of the large ribosomal subunit.</text>
</comment>
<comment type="subcellular location">
    <subcellularLocation>
        <location evidence="1">Cytoplasm</location>
    </subcellularLocation>
</comment>
<comment type="PTM">
    <text evidence="1">Mono-ADP-ribosylation at Glu-4 by PARP16 inhibits polysome assembly and mRNA loading, thereby inhibiting protein translation.</text>
</comment>
<comment type="similarity">
    <text evidence="4">Belongs to the eukaryotic ribosomal protein eL24 family.</text>
</comment>
<reference key="1">
    <citation type="submission" date="2002-10" db="EMBL/GenBank/DDBJ databases">
        <title>Isolation of full-length cDNA clones from macaque brain cDNA libraries.</title>
        <authorList>
            <person name="Osada N."/>
            <person name="Hida M."/>
            <person name="Kusuda J."/>
            <person name="Tanuma R."/>
            <person name="Iseki K."/>
            <person name="Hirata M."/>
            <person name="Suto Y."/>
            <person name="Hirai M."/>
            <person name="Terao K."/>
            <person name="Suzuki Y."/>
            <person name="Sugano S."/>
            <person name="Hashimoto K."/>
            <person name="Kususda J."/>
        </authorList>
    </citation>
    <scope>NUCLEOTIDE SEQUENCE [LARGE SCALE MRNA]</scope>
    <source>
        <tissue>Brain cortex</tissue>
    </source>
</reference>
<evidence type="ECO:0000250" key="1">
    <source>
        <dbReference type="UniProtKB" id="P83731"/>
    </source>
</evidence>
<evidence type="ECO:0000250" key="2">
    <source>
        <dbReference type="UniProtKB" id="Q8BP67"/>
    </source>
</evidence>
<evidence type="ECO:0000256" key="3">
    <source>
        <dbReference type="SAM" id="MobiDB-lite"/>
    </source>
</evidence>
<evidence type="ECO:0000305" key="4"/>
<dbReference type="EMBL" id="AB093678">
    <property type="protein sequence ID" value="BAC21652.1"/>
    <property type="molecule type" value="mRNA"/>
</dbReference>
<dbReference type="RefSeq" id="XP_005548319.1">
    <property type="nucleotide sequence ID" value="XM_005548262.4"/>
</dbReference>
<dbReference type="SMR" id="P61122"/>
<dbReference type="STRING" id="9541.ENSMFAP00000038929"/>
<dbReference type="Ensembl" id="ENSMFAT00000013188.2">
    <property type="protein sequence ID" value="ENSMFAP00000038929.1"/>
    <property type="gene ID" value="ENSMFAG00000038803.2"/>
</dbReference>
<dbReference type="GeneID" id="101866107"/>
<dbReference type="KEGG" id="mcf:101866107"/>
<dbReference type="CTD" id="6152"/>
<dbReference type="VEuPathDB" id="HostDB:ENSMFAG00000038803"/>
<dbReference type="eggNOG" id="KOG1722">
    <property type="taxonomic scope" value="Eukaryota"/>
</dbReference>
<dbReference type="GeneTree" id="ENSGT00950000183105"/>
<dbReference type="OMA" id="PGHGKKM"/>
<dbReference type="OrthoDB" id="15796at314294"/>
<dbReference type="Proteomes" id="UP000233100">
    <property type="component" value="Chromosome 2"/>
</dbReference>
<dbReference type="Bgee" id="ENSMFAG00000038803">
    <property type="expression patterns" value="Expressed in lymph node and 13 other cell types or tissues"/>
</dbReference>
<dbReference type="GO" id="GO:0022625">
    <property type="term" value="C:cytosolic large ribosomal subunit"/>
    <property type="evidence" value="ECO:0007669"/>
    <property type="project" value="Ensembl"/>
</dbReference>
<dbReference type="GO" id="GO:0005783">
    <property type="term" value="C:endoplasmic reticulum"/>
    <property type="evidence" value="ECO:0007669"/>
    <property type="project" value="Ensembl"/>
</dbReference>
<dbReference type="GO" id="GO:0045202">
    <property type="term" value="C:synapse"/>
    <property type="evidence" value="ECO:0007669"/>
    <property type="project" value="Ensembl"/>
</dbReference>
<dbReference type="GO" id="GO:0003729">
    <property type="term" value="F:mRNA binding"/>
    <property type="evidence" value="ECO:0007669"/>
    <property type="project" value="TreeGrafter"/>
</dbReference>
<dbReference type="GO" id="GO:0003735">
    <property type="term" value="F:structural constituent of ribosome"/>
    <property type="evidence" value="ECO:0000250"/>
    <property type="project" value="UniProtKB"/>
</dbReference>
<dbReference type="GO" id="GO:0002181">
    <property type="term" value="P:cytoplasmic translation"/>
    <property type="evidence" value="ECO:0000250"/>
    <property type="project" value="UniProtKB"/>
</dbReference>
<dbReference type="GO" id="GO:0010458">
    <property type="term" value="P:exit from mitosis"/>
    <property type="evidence" value="ECO:0007669"/>
    <property type="project" value="Ensembl"/>
</dbReference>
<dbReference type="GO" id="GO:0021554">
    <property type="term" value="P:optic nerve development"/>
    <property type="evidence" value="ECO:0007669"/>
    <property type="project" value="Ensembl"/>
</dbReference>
<dbReference type="GO" id="GO:0060041">
    <property type="term" value="P:retina development in camera-type eye"/>
    <property type="evidence" value="ECO:0007669"/>
    <property type="project" value="Ensembl"/>
</dbReference>
<dbReference type="GO" id="GO:0031290">
    <property type="term" value="P:retinal ganglion cell axon guidance"/>
    <property type="evidence" value="ECO:0007669"/>
    <property type="project" value="Ensembl"/>
</dbReference>
<dbReference type="GO" id="GO:0000027">
    <property type="term" value="P:ribosomal large subunit assembly"/>
    <property type="evidence" value="ECO:0007669"/>
    <property type="project" value="Ensembl"/>
</dbReference>
<dbReference type="CDD" id="cd00472">
    <property type="entry name" value="Ribosomal_L24e_L24"/>
    <property type="match status" value="1"/>
</dbReference>
<dbReference type="FunFam" id="2.30.170.20:FF:000004">
    <property type="entry name" value="60S ribosomal protein l24"/>
    <property type="match status" value="1"/>
</dbReference>
<dbReference type="Gene3D" id="6.10.250.1270">
    <property type="match status" value="1"/>
</dbReference>
<dbReference type="Gene3D" id="2.30.170.20">
    <property type="entry name" value="Ribosomal protein L24e"/>
    <property type="match status" value="1"/>
</dbReference>
<dbReference type="InterPro" id="IPR038630">
    <property type="entry name" value="L24e/L24_sf"/>
</dbReference>
<dbReference type="InterPro" id="IPR056366">
    <property type="entry name" value="Ribosomal_eL24"/>
</dbReference>
<dbReference type="InterPro" id="IPR000988">
    <property type="entry name" value="Ribosomal_eL24-rel_N"/>
</dbReference>
<dbReference type="InterPro" id="IPR023442">
    <property type="entry name" value="Ribosomal_eL24_CS"/>
</dbReference>
<dbReference type="InterPro" id="IPR011017">
    <property type="entry name" value="TRASH_dom"/>
</dbReference>
<dbReference type="PANTHER" id="PTHR10792">
    <property type="entry name" value="60S RIBOSOMAL PROTEIN L24"/>
    <property type="match status" value="1"/>
</dbReference>
<dbReference type="PANTHER" id="PTHR10792:SF1">
    <property type="entry name" value="RIBOSOMAL PROTEIN L24"/>
    <property type="match status" value="1"/>
</dbReference>
<dbReference type="Pfam" id="PF01246">
    <property type="entry name" value="Ribosomal_L24e"/>
    <property type="match status" value="1"/>
</dbReference>
<dbReference type="SMART" id="SM00746">
    <property type="entry name" value="TRASH"/>
    <property type="match status" value="1"/>
</dbReference>
<dbReference type="SUPFAM" id="SSF57716">
    <property type="entry name" value="Glucocorticoid receptor-like (DNA-binding domain)"/>
    <property type="match status" value="1"/>
</dbReference>
<dbReference type="PROSITE" id="PS01073">
    <property type="entry name" value="RIBOSOMAL_L24E"/>
    <property type="match status" value="1"/>
</dbReference>
<gene>
    <name type="primary">RPL24</name>
    <name type="ORF">QccE-19346</name>
</gene>
<accession>P61122</accession>
<proteinExistence type="evidence at transcript level"/>